<gene>
    <name evidence="4" type="primary">Blys6</name>
    <name type="ORF">BBA_08753</name>
</gene>
<sequence>MKGLCVAACTLVLAAATPLTPRENTCTQGSKTPYGALTHSACPCWNWYEIQTGDGDCGKVASKFGVSREDVIRVEPGRVTPPNPLPTPPCNAADAPYPVGKGTVCGCKKWYRIRRGDDCGPVASEFGISADQLIEWNPWLSADVDGTHYPCMNIWPTDNLCVDVSSF</sequence>
<reference key="1">
    <citation type="journal article" date="2012" name="Sci. Rep.">
        <title>Genomic perspectives on the evolution of fungal entomopathogenicity in Beauveria bassiana.</title>
        <authorList>
            <person name="Xiao G."/>
            <person name="Ying S.-H."/>
            <person name="Zheng P."/>
            <person name="Wang Z.-L."/>
            <person name="Zhang S."/>
            <person name="Xie X.-Q."/>
            <person name="Shang Y."/>
            <person name="St Leger R.J."/>
            <person name="Zhao G.-P."/>
            <person name="Wang C."/>
            <person name="Feng M.-G."/>
        </authorList>
    </citation>
    <scope>NUCLEOTIDE SEQUENCE [LARGE SCALE GENOMIC DNA]</scope>
    <source>
        <strain>ARSEF 2860</strain>
    </source>
</reference>
<reference key="2">
    <citation type="journal article" date="2017" name="PLoS Pathog.">
        <title>Divergent LysM effectors contribute to the virulence of Beauveria bassiana by evasion of insect immune defenses.</title>
        <authorList>
            <person name="Cen K."/>
            <person name="Li B."/>
            <person name="Lu Y."/>
            <person name="Zhang S."/>
            <person name="Wang C."/>
        </authorList>
    </citation>
    <scope>FUNCTION</scope>
    <scope>INDUCTION</scope>
    <scope>DISRUPTION PHENOTYPE</scope>
</reference>
<keyword id="KW-0147">Chitin-binding</keyword>
<keyword id="KW-1185">Reference proteome</keyword>
<keyword id="KW-0732">Signal</keyword>
<keyword id="KW-0843">Virulence</keyword>
<protein>
    <recommendedName>
        <fullName evidence="4">Secreted LysM effector Blys6</fullName>
    </recommendedName>
    <alternativeName>
        <fullName evidence="4">LysM domain-containing protein 6</fullName>
    </alternativeName>
</protein>
<name>LYSM6_BEAB2</name>
<dbReference type="EMBL" id="JH725188">
    <property type="protein sequence ID" value="EJP62326.1"/>
    <property type="molecule type" value="Genomic_DNA"/>
</dbReference>
<dbReference type="RefSeq" id="XP_008602072.1">
    <property type="nucleotide sequence ID" value="XM_008603850.1"/>
</dbReference>
<dbReference type="SMR" id="J5JFB6"/>
<dbReference type="STRING" id="655819.J5JFB6"/>
<dbReference type="GeneID" id="19891765"/>
<dbReference type="HOGENOM" id="CLU_1594224_0_0_1"/>
<dbReference type="InParanoid" id="J5JFB6"/>
<dbReference type="OrthoDB" id="3551at474943"/>
<dbReference type="PHI-base" id="PHI:7379"/>
<dbReference type="Proteomes" id="UP000002762">
    <property type="component" value="Unassembled WGS sequence"/>
</dbReference>
<dbReference type="GO" id="GO:0008061">
    <property type="term" value="F:chitin binding"/>
    <property type="evidence" value="ECO:0007669"/>
    <property type="project" value="UniProtKB-KW"/>
</dbReference>
<dbReference type="CDD" id="cd00118">
    <property type="entry name" value="LysM"/>
    <property type="match status" value="1"/>
</dbReference>
<dbReference type="Gene3D" id="3.10.350.10">
    <property type="entry name" value="LysM domain"/>
    <property type="match status" value="1"/>
</dbReference>
<dbReference type="InterPro" id="IPR052210">
    <property type="entry name" value="LysM1-like"/>
</dbReference>
<dbReference type="InterPro" id="IPR018392">
    <property type="entry name" value="LysM_dom"/>
</dbReference>
<dbReference type="InterPro" id="IPR036779">
    <property type="entry name" value="LysM_dom_sf"/>
</dbReference>
<dbReference type="PANTHER" id="PTHR34997">
    <property type="entry name" value="AM15"/>
    <property type="match status" value="1"/>
</dbReference>
<dbReference type="PANTHER" id="PTHR34997:SF1">
    <property type="entry name" value="PEPTIDOGLYCAN-BINDING LYSIN DOMAIN"/>
    <property type="match status" value="1"/>
</dbReference>
<dbReference type="Pfam" id="PF01476">
    <property type="entry name" value="LysM"/>
    <property type="match status" value="1"/>
</dbReference>
<dbReference type="SUPFAM" id="SSF54106">
    <property type="entry name" value="LysM domain"/>
    <property type="match status" value="1"/>
</dbReference>
<dbReference type="PROSITE" id="PS51782">
    <property type="entry name" value="LYSM"/>
    <property type="match status" value="1"/>
</dbReference>
<feature type="signal peptide" evidence="1">
    <location>
        <begin position="1"/>
        <end position="16"/>
    </location>
</feature>
<feature type="chain" id="PRO_5003783599" description="Secreted LysM effector Blys6">
    <location>
        <begin position="17"/>
        <end position="167"/>
    </location>
</feature>
<feature type="domain" description="LysM" evidence="2">
    <location>
        <begin position="109"/>
        <end position="162"/>
    </location>
</feature>
<comment type="function">
    <text evidence="6">Might have a role in sequestration of chitin oligosaccharides (breakdown products of fungal cell walls that are released during invasion and act as triggers of host immunity) to dampen host defense.</text>
</comment>
<comment type="induction">
    <text evidence="3">Expressed during in vivo infection of insect hosts.</text>
</comment>
<comment type="domain">
    <text evidence="6">The LysM (lysin motif) domains are small globular domains involved in binding chitin in eukaryotes. Blys6 contains one5 LysM domain.</text>
</comment>
<comment type="disruption phenotype">
    <text evidence="3">Does not affect virulence to host insects.</text>
</comment>
<comment type="miscellaneous">
    <text evidence="5">In plants, chitin acts as a microbe-associated molecular pattern (MAMP) that is recognized by lysin motif (LysM)-containing plant cell surface-localized pattern recognition receptors (PRRs) that activate a plethora of downstream immune responses.</text>
</comment>
<comment type="similarity">
    <text evidence="5">Belongs to the secreted LysM effector family.</text>
</comment>
<evidence type="ECO:0000255" key="1"/>
<evidence type="ECO:0000255" key="2">
    <source>
        <dbReference type="PROSITE-ProRule" id="PRU01118"/>
    </source>
</evidence>
<evidence type="ECO:0000269" key="3">
    <source>
    </source>
</evidence>
<evidence type="ECO:0000303" key="4">
    <source>
    </source>
</evidence>
<evidence type="ECO:0000305" key="5"/>
<evidence type="ECO:0000305" key="6">
    <source>
    </source>
</evidence>
<organism>
    <name type="scientific">Beauveria bassiana (strain ARSEF 2860)</name>
    <name type="common">White muscardine disease fungus</name>
    <name type="synonym">Tritirachium shiotae</name>
    <dbReference type="NCBI Taxonomy" id="655819"/>
    <lineage>
        <taxon>Eukaryota</taxon>
        <taxon>Fungi</taxon>
        <taxon>Dikarya</taxon>
        <taxon>Ascomycota</taxon>
        <taxon>Pezizomycotina</taxon>
        <taxon>Sordariomycetes</taxon>
        <taxon>Hypocreomycetidae</taxon>
        <taxon>Hypocreales</taxon>
        <taxon>Cordycipitaceae</taxon>
        <taxon>Beauveria</taxon>
    </lineage>
</organism>
<accession>J5JFB6</accession>
<proteinExistence type="evidence at transcript level"/>